<evidence type="ECO:0000255" key="1"/>
<evidence type="ECO:0000305" key="2"/>
<feature type="chain" id="PRO_0000385412" description="Uncharacterized protein 43">
    <location>
        <begin position="1"/>
        <end position="89"/>
    </location>
</feature>
<feature type="topological domain" description="Cytoplasmic" evidence="1">
    <location>
        <position position="1"/>
    </location>
</feature>
<feature type="transmembrane region" description="Helical" evidence="1">
    <location>
        <begin position="2"/>
        <end position="22"/>
    </location>
</feature>
<feature type="topological domain" description="Extracellular" evidence="1">
    <location>
        <begin position="23"/>
        <end position="89"/>
    </location>
</feature>
<organism>
    <name type="scientific">Sulfolobus islandicus filamentous virus (isolate Iceland/Hveragerdi)</name>
    <name type="common">SIFV</name>
    <dbReference type="NCBI Taxonomy" id="654908"/>
    <lineage>
        <taxon>Viruses</taxon>
        <taxon>Adnaviria</taxon>
        <taxon>Zilligvirae</taxon>
        <taxon>Taleaviricota</taxon>
        <taxon>Tokiviricetes</taxon>
        <taxon>Ligamenvirales</taxon>
        <taxon>Lipothrixviridae</taxon>
        <taxon>Betalipothrixvirus</taxon>
        <taxon>Sulfolobus islandicus filamentous virus</taxon>
    </lineage>
</organism>
<reference key="1">
    <citation type="journal article" date="2000" name="Virology">
        <title>A novel lipothrixvirus, SIFV, of the extremely thermophilic crenarchaeon Sulfolobus.</title>
        <authorList>
            <person name="Arnold H.P."/>
            <person name="Zillig W."/>
            <person name="Ziese U."/>
            <person name="Holz I."/>
            <person name="Crosby M."/>
            <person name="Utterback T."/>
            <person name="Weidmann J.F."/>
            <person name="Umayam L.A."/>
            <person name="Teffera K."/>
            <person name="Kristjanson J.K."/>
            <person name="Klenk H.P."/>
            <person name="Nelson K.E."/>
            <person name="Fraser C.M."/>
        </authorList>
    </citation>
    <scope>NUCLEOTIDE SEQUENCE [GENOMIC DNA]</scope>
</reference>
<protein>
    <recommendedName>
        <fullName>Uncharacterized protein 43</fullName>
    </recommendedName>
</protein>
<organismHost>
    <name type="scientific">Saccharolobus islandicus</name>
    <name type="common">Sulfolobus islandicus</name>
    <dbReference type="NCBI Taxonomy" id="43080"/>
</organismHost>
<comment type="subcellular location">
    <subcellularLocation>
        <location evidence="2">Host membrane</location>
        <topology evidence="2">Single-pass type II membrane protein</topology>
    </subcellularLocation>
</comment>
<name>Y043_SIFVH</name>
<dbReference type="EMBL" id="AF440571">
    <property type="protein sequence ID" value="AAL27752.1"/>
    <property type="molecule type" value="Genomic_DNA"/>
</dbReference>
<dbReference type="RefSeq" id="NP_445706.1">
    <property type="nucleotide sequence ID" value="NC_003214.2"/>
</dbReference>
<dbReference type="SMR" id="Q914I9"/>
<dbReference type="GeneID" id="922293"/>
<dbReference type="KEGG" id="vg:922293"/>
<dbReference type="Proteomes" id="UP000007017">
    <property type="component" value="Segment"/>
</dbReference>
<dbReference type="GO" id="GO:0033644">
    <property type="term" value="C:host cell membrane"/>
    <property type="evidence" value="ECO:0007669"/>
    <property type="project" value="UniProtKB-SubCell"/>
</dbReference>
<dbReference type="GO" id="GO:0016020">
    <property type="term" value="C:membrane"/>
    <property type="evidence" value="ECO:0007669"/>
    <property type="project" value="UniProtKB-KW"/>
</dbReference>
<sequence>MLFEIIYIVSSLFYIVSIIYTLMRIKHINTVAKKEEIRKEIIEYMRSDEVTNIIVKALNESDINKKLNAIVLALCTHVQELKKSKLCEG</sequence>
<accession>Q914I9</accession>
<proteinExistence type="predicted"/>
<gene>
    <name type="primary">SIFV0043</name>
</gene>
<keyword id="KW-1043">Host membrane</keyword>
<keyword id="KW-0472">Membrane</keyword>
<keyword id="KW-1185">Reference proteome</keyword>
<keyword id="KW-0812">Transmembrane</keyword>
<keyword id="KW-1133">Transmembrane helix</keyword>